<gene>
    <name evidence="1" type="primary">rpsR</name>
    <name type="ordered locus">Maqu_2385</name>
</gene>
<comment type="function">
    <text evidence="1">Binds as a heterodimer with protein bS6 to the central domain of the 16S rRNA, where it helps stabilize the platform of the 30S subunit.</text>
</comment>
<comment type="subunit">
    <text evidence="1">Part of the 30S ribosomal subunit. Forms a tight heterodimer with protein bS6.</text>
</comment>
<comment type="similarity">
    <text evidence="1">Belongs to the bacterial ribosomal protein bS18 family.</text>
</comment>
<accession>A1U392</accession>
<keyword id="KW-0687">Ribonucleoprotein</keyword>
<keyword id="KW-0689">Ribosomal protein</keyword>
<keyword id="KW-0694">RNA-binding</keyword>
<keyword id="KW-0699">rRNA-binding</keyword>
<organism>
    <name type="scientific">Marinobacter nauticus (strain ATCC 700491 / DSM 11845 / VT8)</name>
    <name type="common">Marinobacter aquaeolei</name>
    <dbReference type="NCBI Taxonomy" id="351348"/>
    <lineage>
        <taxon>Bacteria</taxon>
        <taxon>Pseudomonadati</taxon>
        <taxon>Pseudomonadota</taxon>
        <taxon>Gammaproteobacteria</taxon>
        <taxon>Pseudomonadales</taxon>
        <taxon>Marinobacteraceae</taxon>
        <taxon>Marinobacter</taxon>
    </lineage>
</organism>
<reference key="1">
    <citation type="journal article" date="2011" name="Appl. Environ. Microbiol.">
        <title>Genomic potential of Marinobacter aquaeolei, a biogeochemical 'opportunitroph'.</title>
        <authorList>
            <person name="Singer E."/>
            <person name="Webb E.A."/>
            <person name="Nelson W.C."/>
            <person name="Heidelberg J.F."/>
            <person name="Ivanova N."/>
            <person name="Pati A."/>
            <person name="Edwards K.J."/>
        </authorList>
    </citation>
    <scope>NUCLEOTIDE SEQUENCE [LARGE SCALE GENOMIC DNA]</scope>
    <source>
        <strain>ATCC 700491 / DSM 11845 / VT8</strain>
    </source>
</reference>
<feature type="chain" id="PRO_1000003532" description="Small ribosomal subunit protein bS18">
    <location>
        <begin position="1"/>
        <end position="76"/>
    </location>
</feature>
<sequence length="76" mass="8925">MARFFRRRKFCRFTAEGVKEIDYKDLDTLKGYITETGKIVPSRITGTKARYQRQLATAIKRARYLALLPYTDGHDH</sequence>
<name>RS18_MARN8</name>
<proteinExistence type="inferred from homology"/>
<protein>
    <recommendedName>
        <fullName evidence="1">Small ribosomal subunit protein bS18</fullName>
    </recommendedName>
    <alternativeName>
        <fullName evidence="2">30S ribosomal protein S18</fullName>
    </alternativeName>
</protein>
<dbReference type="EMBL" id="CP000514">
    <property type="protein sequence ID" value="ABM19461.1"/>
    <property type="molecule type" value="Genomic_DNA"/>
</dbReference>
<dbReference type="RefSeq" id="WP_011785848.1">
    <property type="nucleotide sequence ID" value="NC_008740.1"/>
</dbReference>
<dbReference type="SMR" id="A1U392"/>
<dbReference type="STRING" id="351348.Maqu_2385"/>
<dbReference type="GeneID" id="31820353"/>
<dbReference type="KEGG" id="maq:Maqu_2385"/>
<dbReference type="eggNOG" id="COG0238">
    <property type="taxonomic scope" value="Bacteria"/>
</dbReference>
<dbReference type="HOGENOM" id="CLU_148710_2_3_6"/>
<dbReference type="OrthoDB" id="9812008at2"/>
<dbReference type="Proteomes" id="UP000000998">
    <property type="component" value="Chromosome"/>
</dbReference>
<dbReference type="GO" id="GO:0022627">
    <property type="term" value="C:cytosolic small ribosomal subunit"/>
    <property type="evidence" value="ECO:0007669"/>
    <property type="project" value="TreeGrafter"/>
</dbReference>
<dbReference type="GO" id="GO:0070181">
    <property type="term" value="F:small ribosomal subunit rRNA binding"/>
    <property type="evidence" value="ECO:0007669"/>
    <property type="project" value="TreeGrafter"/>
</dbReference>
<dbReference type="GO" id="GO:0003735">
    <property type="term" value="F:structural constituent of ribosome"/>
    <property type="evidence" value="ECO:0007669"/>
    <property type="project" value="InterPro"/>
</dbReference>
<dbReference type="GO" id="GO:0006412">
    <property type="term" value="P:translation"/>
    <property type="evidence" value="ECO:0007669"/>
    <property type="project" value="UniProtKB-UniRule"/>
</dbReference>
<dbReference type="FunFam" id="4.10.640.10:FF:000001">
    <property type="entry name" value="30S ribosomal protein S18"/>
    <property type="match status" value="1"/>
</dbReference>
<dbReference type="Gene3D" id="4.10.640.10">
    <property type="entry name" value="Ribosomal protein S18"/>
    <property type="match status" value="1"/>
</dbReference>
<dbReference type="HAMAP" id="MF_00270">
    <property type="entry name" value="Ribosomal_bS18"/>
    <property type="match status" value="1"/>
</dbReference>
<dbReference type="InterPro" id="IPR001648">
    <property type="entry name" value="Ribosomal_bS18"/>
</dbReference>
<dbReference type="InterPro" id="IPR018275">
    <property type="entry name" value="Ribosomal_bS18_CS"/>
</dbReference>
<dbReference type="InterPro" id="IPR036870">
    <property type="entry name" value="Ribosomal_bS18_sf"/>
</dbReference>
<dbReference type="NCBIfam" id="TIGR00165">
    <property type="entry name" value="S18"/>
    <property type="match status" value="1"/>
</dbReference>
<dbReference type="PANTHER" id="PTHR13479">
    <property type="entry name" value="30S RIBOSOMAL PROTEIN S18"/>
    <property type="match status" value="1"/>
</dbReference>
<dbReference type="PANTHER" id="PTHR13479:SF40">
    <property type="entry name" value="SMALL RIBOSOMAL SUBUNIT PROTEIN BS18M"/>
    <property type="match status" value="1"/>
</dbReference>
<dbReference type="Pfam" id="PF01084">
    <property type="entry name" value="Ribosomal_S18"/>
    <property type="match status" value="1"/>
</dbReference>
<dbReference type="PRINTS" id="PR00974">
    <property type="entry name" value="RIBOSOMALS18"/>
</dbReference>
<dbReference type="SUPFAM" id="SSF46911">
    <property type="entry name" value="Ribosomal protein S18"/>
    <property type="match status" value="1"/>
</dbReference>
<dbReference type="PROSITE" id="PS00057">
    <property type="entry name" value="RIBOSOMAL_S18"/>
    <property type="match status" value="1"/>
</dbReference>
<evidence type="ECO:0000255" key="1">
    <source>
        <dbReference type="HAMAP-Rule" id="MF_00270"/>
    </source>
</evidence>
<evidence type="ECO:0000305" key="2"/>